<organism>
    <name type="scientific">Nocardia farcinica (strain IFM 10152)</name>
    <dbReference type="NCBI Taxonomy" id="247156"/>
    <lineage>
        <taxon>Bacteria</taxon>
        <taxon>Bacillati</taxon>
        <taxon>Actinomycetota</taxon>
        <taxon>Actinomycetes</taxon>
        <taxon>Mycobacteriales</taxon>
        <taxon>Nocardiaceae</taxon>
        <taxon>Nocardia</taxon>
    </lineage>
</organism>
<feature type="chain" id="PRO_0000307518" description="Triosephosphate isomerase">
    <location>
        <begin position="1"/>
        <end position="261"/>
    </location>
</feature>
<feature type="active site" description="Electrophile" evidence="1">
    <location>
        <position position="100"/>
    </location>
</feature>
<feature type="active site" description="Proton acceptor" evidence="1">
    <location>
        <position position="172"/>
    </location>
</feature>
<feature type="binding site" evidence="1">
    <location>
        <begin position="10"/>
        <end position="12"/>
    </location>
    <ligand>
        <name>substrate</name>
    </ligand>
</feature>
<feature type="binding site" evidence="1">
    <location>
        <position position="178"/>
    </location>
    <ligand>
        <name>substrate</name>
    </ligand>
</feature>
<feature type="binding site" evidence="1">
    <location>
        <position position="218"/>
    </location>
    <ligand>
        <name>substrate</name>
    </ligand>
</feature>
<feature type="binding site" evidence="1">
    <location>
        <begin position="239"/>
        <end position="240"/>
    </location>
    <ligand>
        <name>substrate</name>
    </ligand>
</feature>
<proteinExistence type="inferred from homology"/>
<comment type="function">
    <text evidence="1">Involved in the gluconeogenesis. Catalyzes stereospecifically the conversion of dihydroxyacetone phosphate (DHAP) to D-glyceraldehyde-3-phosphate (G3P).</text>
</comment>
<comment type="catalytic activity">
    <reaction evidence="1">
        <text>D-glyceraldehyde 3-phosphate = dihydroxyacetone phosphate</text>
        <dbReference type="Rhea" id="RHEA:18585"/>
        <dbReference type="ChEBI" id="CHEBI:57642"/>
        <dbReference type="ChEBI" id="CHEBI:59776"/>
        <dbReference type="EC" id="5.3.1.1"/>
    </reaction>
</comment>
<comment type="pathway">
    <text evidence="1">Carbohydrate biosynthesis; gluconeogenesis.</text>
</comment>
<comment type="pathway">
    <text evidence="1">Carbohydrate degradation; glycolysis; D-glyceraldehyde 3-phosphate from glycerone phosphate: step 1/1.</text>
</comment>
<comment type="subunit">
    <text evidence="1">Homodimer.</text>
</comment>
<comment type="subcellular location">
    <subcellularLocation>
        <location evidence="1">Cytoplasm</location>
    </subcellularLocation>
</comment>
<comment type="similarity">
    <text evidence="1">Belongs to the triosephosphate isomerase family.</text>
</comment>
<gene>
    <name evidence="1" type="primary">tpiA</name>
    <name type="ordered locus">NFA_35870</name>
</gene>
<sequence length="261" mass="27415">MARKPLIAGNWKMNLNHLEAIALVQKIAFALPEKYFEKVDVAVIPPFVDIRSVQTLVEGDKLLLTYGAQDVSVHESGAYTGEISASMLAKLGCTFVVVGHSERRQYHHEDDATVLGKAKKALEHGLTPIVCIGEGLNVREAGTHVEYNLEQLRGSLKGLSAEQIAKVVIAYEPVWAIGTGKVASAADAQEVCGAIRAELAELAGPEVAAQVRVLYGGSVNAKNVGELVAQPDVDGALVGGASLKGDEFATLSAIAAGGPLP</sequence>
<protein>
    <recommendedName>
        <fullName evidence="1">Triosephosphate isomerase</fullName>
        <shortName evidence="1">TIM</shortName>
        <shortName evidence="1">TPI</shortName>
        <ecNumber evidence="1">5.3.1.1</ecNumber>
    </recommendedName>
    <alternativeName>
        <fullName evidence="1">Triose-phosphate isomerase</fullName>
    </alternativeName>
</protein>
<name>TPIS_NOCFA</name>
<dbReference type="EC" id="5.3.1.1" evidence="1"/>
<dbReference type="EMBL" id="AP006618">
    <property type="protein sequence ID" value="BAD58435.1"/>
    <property type="molecule type" value="Genomic_DNA"/>
</dbReference>
<dbReference type="RefSeq" id="WP_011210120.1">
    <property type="nucleotide sequence ID" value="NC_006361.1"/>
</dbReference>
<dbReference type="SMR" id="Q5YTQ6"/>
<dbReference type="STRING" id="247156.NFA_35870"/>
<dbReference type="GeneID" id="69054575"/>
<dbReference type="KEGG" id="nfa:NFA_35870"/>
<dbReference type="eggNOG" id="COG0149">
    <property type="taxonomic scope" value="Bacteria"/>
</dbReference>
<dbReference type="HOGENOM" id="CLU_024251_2_3_11"/>
<dbReference type="OrthoDB" id="9809429at2"/>
<dbReference type="UniPathway" id="UPA00109">
    <property type="reaction ID" value="UER00189"/>
</dbReference>
<dbReference type="UniPathway" id="UPA00138"/>
<dbReference type="Proteomes" id="UP000006820">
    <property type="component" value="Chromosome"/>
</dbReference>
<dbReference type="GO" id="GO:0005829">
    <property type="term" value="C:cytosol"/>
    <property type="evidence" value="ECO:0007669"/>
    <property type="project" value="TreeGrafter"/>
</dbReference>
<dbReference type="GO" id="GO:0004807">
    <property type="term" value="F:triose-phosphate isomerase activity"/>
    <property type="evidence" value="ECO:0007669"/>
    <property type="project" value="UniProtKB-UniRule"/>
</dbReference>
<dbReference type="GO" id="GO:0006094">
    <property type="term" value="P:gluconeogenesis"/>
    <property type="evidence" value="ECO:0007669"/>
    <property type="project" value="UniProtKB-UniRule"/>
</dbReference>
<dbReference type="GO" id="GO:0046166">
    <property type="term" value="P:glyceraldehyde-3-phosphate biosynthetic process"/>
    <property type="evidence" value="ECO:0007669"/>
    <property type="project" value="TreeGrafter"/>
</dbReference>
<dbReference type="GO" id="GO:0019563">
    <property type="term" value="P:glycerol catabolic process"/>
    <property type="evidence" value="ECO:0007669"/>
    <property type="project" value="TreeGrafter"/>
</dbReference>
<dbReference type="GO" id="GO:0006096">
    <property type="term" value="P:glycolytic process"/>
    <property type="evidence" value="ECO:0007669"/>
    <property type="project" value="UniProtKB-UniRule"/>
</dbReference>
<dbReference type="CDD" id="cd00311">
    <property type="entry name" value="TIM"/>
    <property type="match status" value="1"/>
</dbReference>
<dbReference type="FunFam" id="3.20.20.70:FF:000020">
    <property type="entry name" value="Triosephosphate isomerase"/>
    <property type="match status" value="1"/>
</dbReference>
<dbReference type="Gene3D" id="3.20.20.70">
    <property type="entry name" value="Aldolase class I"/>
    <property type="match status" value="1"/>
</dbReference>
<dbReference type="HAMAP" id="MF_00147_B">
    <property type="entry name" value="TIM_B"/>
    <property type="match status" value="1"/>
</dbReference>
<dbReference type="InterPro" id="IPR013785">
    <property type="entry name" value="Aldolase_TIM"/>
</dbReference>
<dbReference type="InterPro" id="IPR035990">
    <property type="entry name" value="TIM_sf"/>
</dbReference>
<dbReference type="InterPro" id="IPR022896">
    <property type="entry name" value="TrioseP_Isoase_bac/euk"/>
</dbReference>
<dbReference type="InterPro" id="IPR000652">
    <property type="entry name" value="Triosephosphate_isomerase"/>
</dbReference>
<dbReference type="InterPro" id="IPR020861">
    <property type="entry name" value="Triosephosphate_isomerase_AS"/>
</dbReference>
<dbReference type="NCBIfam" id="TIGR00419">
    <property type="entry name" value="tim"/>
    <property type="match status" value="1"/>
</dbReference>
<dbReference type="PANTHER" id="PTHR21139">
    <property type="entry name" value="TRIOSEPHOSPHATE ISOMERASE"/>
    <property type="match status" value="1"/>
</dbReference>
<dbReference type="PANTHER" id="PTHR21139:SF42">
    <property type="entry name" value="TRIOSEPHOSPHATE ISOMERASE"/>
    <property type="match status" value="1"/>
</dbReference>
<dbReference type="Pfam" id="PF00121">
    <property type="entry name" value="TIM"/>
    <property type="match status" value="1"/>
</dbReference>
<dbReference type="SUPFAM" id="SSF51351">
    <property type="entry name" value="Triosephosphate isomerase (TIM)"/>
    <property type="match status" value="1"/>
</dbReference>
<dbReference type="PROSITE" id="PS00171">
    <property type="entry name" value="TIM_1"/>
    <property type="match status" value="1"/>
</dbReference>
<dbReference type="PROSITE" id="PS51440">
    <property type="entry name" value="TIM_2"/>
    <property type="match status" value="1"/>
</dbReference>
<reference key="1">
    <citation type="journal article" date="2004" name="Proc. Natl. Acad. Sci. U.S.A.">
        <title>The complete genomic sequence of Nocardia farcinica IFM 10152.</title>
        <authorList>
            <person name="Ishikawa J."/>
            <person name="Yamashita A."/>
            <person name="Mikami Y."/>
            <person name="Hoshino Y."/>
            <person name="Kurita H."/>
            <person name="Hotta K."/>
            <person name="Shiba T."/>
            <person name="Hattori M."/>
        </authorList>
    </citation>
    <scope>NUCLEOTIDE SEQUENCE [LARGE SCALE GENOMIC DNA]</scope>
    <source>
        <strain>IFM 10152</strain>
    </source>
</reference>
<accession>Q5YTQ6</accession>
<keyword id="KW-0963">Cytoplasm</keyword>
<keyword id="KW-0312">Gluconeogenesis</keyword>
<keyword id="KW-0324">Glycolysis</keyword>
<keyword id="KW-0413">Isomerase</keyword>
<keyword id="KW-1185">Reference proteome</keyword>
<evidence type="ECO:0000255" key="1">
    <source>
        <dbReference type="HAMAP-Rule" id="MF_00147"/>
    </source>
</evidence>